<protein>
    <recommendedName>
        <fullName evidence="2">tRNA (guanine-N(7)-)-methyltransferase</fullName>
        <ecNumber evidence="2">2.1.1.33</ecNumber>
    </recommendedName>
    <alternativeName>
        <fullName evidence="2">tRNA (guanine(46)-N(7))-methyltransferase</fullName>
    </alternativeName>
    <alternativeName>
        <fullName evidence="2">tRNA(m7G46)-methyltransferase</fullName>
    </alternativeName>
</protein>
<feature type="chain" id="PRO_0000288203" description="tRNA (guanine-N(7)-)-methyltransferase">
    <location>
        <begin position="1"/>
        <end position="244"/>
    </location>
</feature>
<feature type="region of interest" description="Disordered" evidence="3">
    <location>
        <begin position="1"/>
        <end position="20"/>
    </location>
</feature>
<feature type="compositionally biased region" description="Polar residues" evidence="3">
    <location>
        <begin position="1"/>
        <end position="10"/>
    </location>
</feature>
<feature type="active site" evidence="1">
    <location>
        <position position="149"/>
    </location>
</feature>
<feature type="binding site" evidence="2">
    <location>
        <position position="74"/>
    </location>
    <ligand>
        <name>S-adenosyl-L-methionine</name>
        <dbReference type="ChEBI" id="CHEBI:59789"/>
    </ligand>
</feature>
<feature type="binding site" evidence="2">
    <location>
        <position position="99"/>
    </location>
    <ligand>
        <name>S-adenosyl-L-methionine</name>
        <dbReference type="ChEBI" id="CHEBI:59789"/>
    </ligand>
</feature>
<feature type="binding site" evidence="2">
    <location>
        <position position="126"/>
    </location>
    <ligand>
        <name>S-adenosyl-L-methionine</name>
        <dbReference type="ChEBI" id="CHEBI:59789"/>
    </ligand>
</feature>
<feature type="binding site" evidence="2">
    <location>
        <position position="149"/>
    </location>
    <ligand>
        <name>S-adenosyl-L-methionine</name>
        <dbReference type="ChEBI" id="CHEBI:59789"/>
    </ligand>
</feature>
<feature type="binding site" evidence="2">
    <location>
        <position position="153"/>
    </location>
    <ligand>
        <name>substrate</name>
    </ligand>
</feature>
<feature type="binding site" evidence="2">
    <location>
        <position position="185"/>
    </location>
    <ligand>
        <name>substrate</name>
    </ligand>
</feature>
<feature type="binding site" evidence="2">
    <location>
        <begin position="222"/>
        <end position="225"/>
    </location>
    <ligand>
        <name>substrate</name>
    </ligand>
</feature>
<evidence type="ECO:0000250" key="1"/>
<evidence type="ECO:0000255" key="2">
    <source>
        <dbReference type="HAMAP-Rule" id="MF_01057"/>
    </source>
</evidence>
<evidence type="ECO:0000256" key="3">
    <source>
        <dbReference type="SAM" id="MobiDB-lite"/>
    </source>
</evidence>
<evidence type="ECO:0000305" key="4"/>
<gene>
    <name evidence="2" type="primary">trmB</name>
    <name type="ordered locus">PA14_05000</name>
</gene>
<comment type="function">
    <text evidence="2">Catalyzes the formation of N(7)-methylguanine at position 46 (m7G46) in tRNA.</text>
</comment>
<comment type="catalytic activity">
    <reaction evidence="2">
        <text>guanosine(46) in tRNA + S-adenosyl-L-methionine = N(7)-methylguanosine(46) in tRNA + S-adenosyl-L-homocysteine</text>
        <dbReference type="Rhea" id="RHEA:42708"/>
        <dbReference type="Rhea" id="RHEA-COMP:10188"/>
        <dbReference type="Rhea" id="RHEA-COMP:10189"/>
        <dbReference type="ChEBI" id="CHEBI:57856"/>
        <dbReference type="ChEBI" id="CHEBI:59789"/>
        <dbReference type="ChEBI" id="CHEBI:74269"/>
        <dbReference type="ChEBI" id="CHEBI:74480"/>
        <dbReference type="EC" id="2.1.1.33"/>
    </reaction>
</comment>
<comment type="pathway">
    <text evidence="2">tRNA modification; N(7)-methylguanine-tRNA biosynthesis.</text>
</comment>
<comment type="similarity">
    <text evidence="2">Belongs to the class I-like SAM-binding methyltransferase superfamily. TrmB family.</text>
</comment>
<comment type="sequence caution" evidence="4">
    <conflict type="erroneous initiation">
        <sequence resource="EMBL-CDS" id="ABJ15348"/>
    </conflict>
</comment>
<dbReference type="EC" id="2.1.1.33" evidence="2"/>
<dbReference type="EMBL" id="CP000438">
    <property type="protein sequence ID" value="ABJ15348.1"/>
    <property type="status" value="ALT_INIT"/>
    <property type="molecule type" value="Genomic_DNA"/>
</dbReference>
<dbReference type="SMR" id="Q02U31"/>
<dbReference type="KEGG" id="pau:PA14_05000"/>
<dbReference type="PseudoCAP" id="PA14_05000"/>
<dbReference type="HOGENOM" id="CLU_050910_0_1_6"/>
<dbReference type="BioCyc" id="PAER208963:G1G74-416-MONOMER"/>
<dbReference type="BRENDA" id="2.1.1.33">
    <property type="organism ID" value="5087"/>
</dbReference>
<dbReference type="UniPathway" id="UPA00989"/>
<dbReference type="Proteomes" id="UP000000653">
    <property type="component" value="Chromosome"/>
</dbReference>
<dbReference type="GO" id="GO:0043527">
    <property type="term" value="C:tRNA methyltransferase complex"/>
    <property type="evidence" value="ECO:0007669"/>
    <property type="project" value="TreeGrafter"/>
</dbReference>
<dbReference type="GO" id="GO:0008176">
    <property type="term" value="F:tRNA (guanine(46)-N7)-methyltransferase activity"/>
    <property type="evidence" value="ECO:0007669"/>
    <property type="project" value="UniProtKB-UniRule"/>
</dbReference>
<dbReference type="CDD" id="cd02440">
    <property type="entry name" value="AdoMet_MTases"/>
    <property type="match status" value="1"/>
</dbReference>
<dbReference type="FunFam" id="3.40.50.150:FF:000024">
    <property type="entry name" value="tRNA (guanine-N(7)-)-methyltransferase"/>
    <property type="match status" value="1"/>
</dbReference>
<dbReference type="Gene3D" id="3.40.50.150">
    <property type="entry name" value="Vaccinia Virus protein VP39"/>
    <property type="match status" value="1"/>
</dbReference>
<dbReference type="HAMAP" id="MF_01057">
    <property type="entry name" value="tRNA_methyltr_TrmB"/>
    <property type="match status" value="1"/>
</dbReference>
<dbReference type="InterPro" id="IPR029063">
    <property type="entry name" value="SAM-dependent_MTases_sf"/>
</dbReference>
<dbReference type="InterPro" id="IPR003358">
    <property type="entry name" value="tRNA_(Gua-N-7)_MeTrfase_Trmb"/>
</dbReference>
<dbReference type="InterPro" id="IPR055361">
    <property type="entry name" value="tRNA_methyltr_TrmB_bact"/>
</dbReference>
<dbReference type="NCBIfam" id="TIGR00091">
    <property type="entry name" value="tRNA (guanosine(46)-N7)-methyltransferase TrmB"/>
    <property type="match status" value="1"/>
</dbReference>
<dbReference type="PANTHER" id="PTHR23417">
    <property type="entry name" value="3-DEOXY-D-MANNO-OCTULOSONIC-ACID TRANSFERASE/TRNA GUANINE-N 7 - -METHYLTRANSFERASE"/>
    <property type="match status" value="1"/>
</dbReference>
<dbReference type="PANTHER" id="PTHR23417:SF14">
    <property type="entry name" value="PENTACOTRIPEPTIDE-REPEAT REGION OF PRORP DOMAIN-CONTAINING PROTEIN"/>
    <property type="match status" value="1"/>
</dbReference>
<dbReference type="Pfam" id="PF02390">
    <property type="entry name" value="Methyltransf_4"/>
    <property type="match status" value="1"/>
</dbReference>
<dbReference type="SUPFAM" id="SSF53335">
    <property type="entry name" value="S-adenosyl-L-methionine-dependent methyltransferases"/>
    <property type="match status" value="1"/>
</dbReference>
<dbReference type="PROSITE" id="PS51625">
    <property type="entry name" value="SAM_MT_TRMB"/>
    <property type="match status" value="1"/>
</dbReference>
<organism>
    <name type="scientific">Pseudomonas aeruginosa (strain UCBPP-PA14)</name>
    <dbReference type="NCBI Taxonomy" id="208963"/>
    <lineage>
        <taxon>Bacteria</taxon>
        <taxon>Pseudomonadati</taxon>
        <taxon>Pseudomonadota</taxon>
        <taxon>Gammaproteobacteria</taxon>
        <taxon>Pseudomonadales</taxon>
        <taxon>Pseudomonadaceae</taxon>
        <taxon>Pseudomonas</taxon>
    </lineage>
</organism>
<proteinExistence type="inferred from homology"/>
<reference key="1">
    <citation type="journal article" date="2006" name="Genome Biol.">
        <title>Genomic analysis reveals that Pseudomonas aeruginosa virulence is combinatorial.</title>
        <authorList>
            <person name="Lee D.G."/>
            <person name="Urbach J.M."/>
            <person name="Wu G."/>
            <person name="Liberati N.T."/>
            <person name="Feinbaum R.L."/>
            <person name="Miyata S."/>
            <person name="Diggins L.T."/>
            <person name="He J."/>
            <person name="Saucier M."/>
            <person name="Deziel E."/>
            <person name="Friedman L."/>
            <person name="Li L."/>
            <person name="Grills G."/>
            <person name="Montgomery K."/>
            <person name="Kucherlapati R."/>
            <person name="Rahme L.G."/>
            <person name="Ausubel F.M."/>
        </authorList>
    </citation>
    <scope>NUCLEOTIDE SEQUENCE [LARGE SCALE GENOMIC DNA]</scope>
    <source>
        <strain>UCBPP-PA14</strain>
    </source>
</reference>
<name>TRMB_PSEAB</name>
<keyword id="KW-0489">Methyltransferase</keyword>
<keyword id="KW-0949">S-adenosyl-L-methionine</keyword>
<keyword id="KW-0808">Transferase</keyword>
<keyword id="KW-0819">tRNA processing</keyword>
<accession>Q02U31</accession>
<sequence>MSDTPQSPAQGSLAEHDEARPMRTVKSFVMRAGRMTEGQQRGLDLGWPKFGLELSDEVQDFDAIFGRQAPRTFEIGFGMGHSTLEMAAAAPDIDFIGVEVHKPGVGALLNGLLTQGLGNVRVYSCDALEVLRHCVADASLDRLLLFFPDPWHKKRHHKRRIVQPEFAELVRRKLKVGGVLHMATDWEPYAEHMLDVMSAAPGYRNQAEDGRFVARPQERPVTKFERRGERLGHGVWDLKFERID</sequence>